<accession>Q730L9</accession>
<sequence length="338" mass="37857">MLTERQLLILQTIIDDFIGSAQPVGSRTLAKKDEITFSSATIRNEMADLEELGFIEKTHSSSGRVPSEKGYRFYVDHLLAPQNLPNDEIVQIKDLFAERIFEAEKIAQQSAQILSELTNYTAIVLGPKLSTNKLKNVQIVPLDRQTAVAIIVTDTGHVQSKTITVPESVDLSDLEKMVNILNEKLSGVPMSELHNKIFKEIVTVLRGYVHNYDSAIKILDGTFQVPLSEKIYFGGKANMLSQPEFHDIQKVRSLLTMIDNEAEFYDILRHKQVGIQVKIGRENSSTAMEDCSLISATYSIGEEQVGTIAILGPTRMQYSRVISLLQLFTRQITDGLKK</sequence>
<organism>
    <name type="scientific">Bacillus cereus (strain ATCC 10987 / NRS 248)</name>
    <dbReference type="NCBI Taxonomy" id="222523"/>
    <lineage>
        <taxon>Bacteria</taxon>
        <taxon>Bacillati</taxon>
        <taxon>Bacillota</taxon>
        <taxon>Bacilli</taxon>
        <taxon>Bacillales</taxon>
        <taxon>Bacillaceae</taxon>
        <taxon>Bacillus</taxon>
        <taxon>Bacillus cereus group</taxon>
    </lineage>
</organism>
<name>HRCA_BACC1</name>
<dbReference type="EMBL" id="AE017194">
    <property type="protein sequence ID" value="AAS43298.1"/>
    <property type="molecule type" value="Genomic_DNA"/>
</dbReference>
<dbReference type="SMR" id="Q730L9"/>
<dbReference type="KEGG" id="bca:BCE_4397"/>
<dbReference type="HOGENOM" id="CLU_050019_1_0_9"/>
<dbReference type="Proteomes" id="UP000002527">
    <property type="component" value="Chromosome"/>
</dbReference>
<dbReference type="GO" id="GO:0003677">
    <property type="term" value="F:DNA binding"/>
    <property type="evidence" value="ECO:0007669"/>
    <property type="project" value="InterPro"/>
</dbReference>
<dbReference type="GO" id="GO:0045892">
    <property type="term" value="P:negative regulation of DNA-templated transcription"/>
    <property type="evidence" value="ECO:0007669"/>
    <property type="project" value="UniProtKB-UniRule"/>
</dbReference>
<dbReference type="FunFam" id="1.10.10.10:FF:000049">
    <property type="entry name" value="Heat-inducible transcription repressor HrcA"/>
    <property type="match status" value="1"/>
</dbReference>
<dbReference type="FunFam" id="3.30.390.60:FF:000001">
    <property type="entry name" value="Heat-inducible transcription repressor HrcA"/>
    <property type="match status" value="1"/>
</dbReference>
<dbReference type="Gene3D" id="3.30.450.40">
    <property type="match status" value="1"/>
</dbReference>
<dbReference type="Gene3D" id="3.30.390.60">
    <property type="entry name" value="Heat-inducible transcription repressor hrca homolog, domain 3"/>
    <property type="match status" value="1"/>
</dbReference>
<dbReference type="Gene3D" id="1.10.10.10">
    <property type="entry name" value="Winged helix-like DNA-binding domain superfamily/Winged helix DNA-binding domain"/>
    <property type="match status" value="1"/>
</dbReference>
<dbReference type="HAMAP" id="MF_00081">
    <property type="entry name" value="HrcA"/>
    <property type="match status" value="1"/>
</dbReference>
<dbReference type="InterPro" id="IPR029016">
    <property type="entry name" value="GAF-like_dom_sf"/>
</dbReference>
<dbReference type="InterPro" id="IPR002571">
    <property type="entry name" value="HrcA"/>
</dbReference>
<dbReference type="InterPro" id="IPR021153">
    <property type="entry name" value="HrcA_C"/>
</dbReference>
<dbReference type="InterPro" id="IPR036388">
    <property type="entry name" value="WH-like_DNA-bd_sf"/>
</dbReference>
<dbReference type="InterPro" id="IPR036390">
    <property type="entry name" value="WH_DNA-bd_sf"/>
</dbReference>
<dbReference type="InterPro" id="IPR023120">
    <property type="entry name" value="WHTH_transcript_rep_HrcA_IDD"/>
</dbReference>
<dbReference type="NCBIfam" id="TIGR00331">
    <property type="entry name" value="hrcA"/>
    <property type="match status" value="1"/>
</dbReference>
<dbReference type="PANTHER" id="PTHR34824">
    <property type="entry name" value="HEAT-INDUCIBLE TRANSCRIPTION REPRESSOR HRCA"/>
    <property type="match status" value="1"/>
</dbReference>
<dbReference type="PANTHER" id="PTHR34824:SF1">
    <property type="entry name" value="HEAT-INDUCIBLE TRANSCRIPTION REPRESSOR HRCA"/>
    <property type="match status" value="1"/>
</dbReference>
<dbReference type="Pfam" id="PF01628">
    <property type="entry name" value="HrcA"/>
    <property type="match status" value="1"/>
</dbReference>
<dbReference type="PIRSF" id="PIRSF005485">
    <property type="entry name" value="HrcA"/>
    <property type="match status" value="1"/>
</dbReference>
<dbReference type="SUPFAM" id="SSF55781">
    <property type="entry name" value="GAF domain-like"/>
    <property type="match status" value="1"/>
</dbReference>
<dbReference type="SUPFAM" id="SSF46785">
    <property type="entry name" value="Winged helix' DNA-binding domain"/>
    <property type="match status" value="1"/>
</dbReference>
<proteinExistence type="inferred from homology"/>
<evidence type="ECO:0000255" key="1">
    <source>
        <dbReference type="HAMAP-Rule" id="MF_00081"/>
    </source>
</evidence>
<comment type="function">
    <text evidence="1">Negative regulator of class I heat shock genes (grpE-dnaK-dnaJ and groELS operons). Prevents heat-shock induction of these operons.</text>
</comment>
<comment type="similarity">
    <text evidence="1">Belongs to the HrcA family.</text>
</comment>
<keyword id="KW-0678">Repressor</keyword>
<keyword id="KW-0346">Stress response</keyword>
<keyword id="KW-0804">Transcription</keyword>
<keyword id="KW-0805">Transcription regulation</keyword>
<feature type="chain" id="PRO_0000182441" description="Heat-inducible transcription repressor HrcA">
    <location>
        <begin position="1"/>
        <end position="338"/>
    </location>
</feature>
<gene>
    <name evidence="1" type="primary">hrcA</name>
    <name type="ordered locus">BCE_4397</name>
</gene>
<protein>
    <recommendedName>
        <fullName evidence="1">Heat-inducible transcription repressor HrcA</fullName>
    </recommendedName>
</protein>
<reference key="1">
    <citation type="journal article" date="2004" name="Nucleic Acids Res.">
        <title>The genome sequence of Bacillus cereus ATCC 10987 reveals metabolic adaptations and a large plasmid related to Bacillus anthracis pXO1.</title>
        <authorList>
            <person name="Rasko D.A."/>
            <person name="Ravel J."/>
            <person name="Oekstad O.A."/>
            <person name="Helgason E."/>
            <person name="Cer R.Z."/>
            <person name="Jiang L."/>
            <person name="Shores K.A."/>
            <person name="Fouts D.E."/>
            <person name="Tourasse N.J."/>
            <person name="Angiuoli S.V."/>
            <person name="Kolonay J.F."/>
            <person name="Nelson W.C."/>
            <person name="Kolstoe A.-B."/>
            <person name="Fraser C.M."/>
            <person name="Read T.D."/>
        </authorList>
    </citation>
    <scope>NUCLEOTIDE SEQUENCE [LARGE SCALE GENOMIC DNA]</scope>
    <source>
        <strain>ATCC 10987 / NRS 248</strain>
    </source>
</reference>